<gene>
    <name type="primary">rseP</name>
    <name type="ordered locus">YPO1051</name>
    <name type="ordered locus">y3128</name>
    <name type="ordered locus">YP_2799</name>
</gene>
<evidence type="ECO:0000250" key="1"/>
<evidence type="ECO:0000255" key="2"/>
<evidence type="ECO:0000255" key="3">
    <source>
        <dbReference type="PROSITE-ProRule" id="PRU00143"/>
    </source>
</evidence>
<evidence type="ECO:0000255" key="4">
    <source>
        <dbReference type="PROSITE-ProRule" id="PRU10095"/>
    </source>
</evidence>
<evidence type="ECO:0000305" key="5"/>
<keyword id="KW-0997">Cell inner membrane</keyword>
<keyword id="KW-1003">Cell membrane</keyword>
<keyword id="KW-0378">Hydrolase</keyword>
<keyword id="KW-0472">Membrane</keyword>
<keyword id="KW-0479">Metal-binding</keyword>
<keyword id="KW-0482">Metalloprotease</keyword>
<keyword id="KW-0645">Protease</keyword>
<keyword id="KW-1185">Reference proteome</keyword>
<keyword id="KW-0677">Repeat</keyword>
<keyword id="KW-0812">Transmembrane</keyword>
<keyword id="KW-1133">Transmembrane helix</keyword>
<keyword id="KW-0862">Zinc</keyword>
<name>RSEP_YERPE</name>
<sequence length="451" mass="49429">MMSILWSLAAFIVALGILITVHEFGHFWVARRCGVRVERFSIGFGKALWRRTDRQGTEYVIALIPLGGYVKMLDERVEAVAPELRHQSFNNKTVLQRAAIVSAGPIANFLFAIVAYWLVFIIGVPSVRPVIGDISPQSIAAQANISSGMELKSVDGIETPDWDSVRLALISRIGDKQMQVGVAPFGSDNVVEKTLDLRQWQFEPDKQDPVVALGIIPRGPQIESVLAEVQPGSAAQKAGLQAGDRIVKVNGQLLDRWQTFVLQVRDNPGQPLVLDIERESTPLSLTLIPDTKSVGENRSEGFAGVVPKVIPLPDEYKTIRQYGPFTAVYQAGDKTWQLMRLTVSMLGKLITGDVKLNNLSGPISIAQGAGLSAEYGLVYYLMFLALISVNLGIINLFPLPVLDGGHLLFLAIEKLKGGPVSERVQDFSYRIGSILLVLLMGLALFNDFSRL</sequence>
<feature type="chain" id="PRO_0000088422" description="Protease RseP">
    <location>
        <begin position="1"/>
        <end position="451"/>
    </location>
</feature>
<feature type="transmembrane region" description="Helical" evidence="2">
    <location>
        <begin position="98"/>
        <end position="120"/>
    </location>
</feature>
<feature type="transmembrane region" description="Helical" evidence="2">
    <location>
        <begin position="377"/>
        <end position="399"/>
    </location>
</feature>
<feature type="transmembrane region" description="Helical" evidence="2">
    <location>
        <begin position="427"/>
        <end position="446"/>
    </location>
</feature>
<feature type="domain" description="PDZ 1" evidence="3">
    <location>
        <begin position="115"/>
        <end position="186"/>
    </location>
</feature>
<feature type="domain" description="PDZ 2" evidence="3">
    <location>
        <begin position="199"/>
        <end position="280"/>
    </location>
</feature>
<feature type="active site" evidence="4">
    <location>
        <position position="23"/>
    </location>
</feature>
<feature type="binding site" evidence="4">
    <location>
        <position position="22"/>
    </location>
    <ligand>
        <name>Zn(2+)</name>
        <dbReference type="ChEBI" id="CHEBI:29105"/>
        <note>catalytic</note>
    </ligand>
</feature>
<feature type="binding site" evidence="4">
    <location>
        <position position="26"/>
    </location>
    <ligand>
        <name>Zn(2+)</name>
        <dbReference type="ChEBI" id="CHEBI:29105"/>
        <note>catalytic</note>
    </ligand>
</feature>
<accession>Q8ZH59</accession>
<accession>Q0WHZ4</accession>
<organism>
    <name type="scientific">Yersinia pestis</name>
    <dbReference type="NCBI Taxonomy" id="632"/>
    <lineage>
        <taxon>Bacteria</taxon>
        <taxon>Pseudomonadati</taxon>
        <taxon>Pseudomonadota</taxon>
        <taxon>Gammaproteobacteria</taxon>
        <taxon>Enterobacterales</taxon>
        <taxon>Yersiniaceae</taxon>
        <taxon>Yersinia</taxon>
    </lineage>
</organism>
<reference key="1">
    <citation type="journal article" date="2001" name="Nature">
        <title>Genome sequence of Yersinia pestis, the causative agent of plague.</title>
        <authorList>
            <person name="Parkhill J."/>
            <person name="Wren B.W."/>
            <person name="Thomson N.R."/>
            <person name="Titball R.W."/>
            <person name="Holden M.T.G."/>
            <person name="Prentice M.B."/>
            <person name="Sebaihia M."/>
            <person name="James K.D."/>
            <person name="Churcher C.M."/>
            <person name="Mungall K.L."/>
            <person name="Baker S."/>
            <person name="Basham D."/>
            <person name="Bentley S.D."/>
            <person name="Brooks K."/>
            <person name="Cerdeno-Tarraga A.-M."/>
            <person name="Chillingworth T."/>
            <person name="Cronin A."/>
            <person name="Davies R.M."/>
            <person name="Davis P."/>
            <person name="Dougan G."/>
            <person name="Feltwell T."/>
            <person name="Hamlin N."/>
            <person name="Holroyd S."/>
            <person name="Jagels K."/>
            <person name="Karlyshev A.V."/>
            <person name="Leather S."/>
            <person name="Moule S."/>
            <person name="Oyston P.C.F."/>
            <person name="Quail M.A."/>
            <person name="Rutherford K.M."/>
            <person name="Simmonds M."/>
            <person name="Skelton J."/>
            <person name="Stevens K."/>
            <person name="Whitehead S."/>
            <person name="Barrell B.G."/>
        </authorList>
    </citation>
    <scope>NUCLEOTIDE SEQUENCE [LARGE SCALE GENOMIC DNA]</scope>
    <source>
        <strain>CO-92 / Biovar Orientalis</strain>
    </source>
</reference>
<reference key="2">
    <citation type="journal article" date="2002" name="J. Bacteriol.">
        <title>Genome sequence of Yersinia pestis KIM.</title>
        <authorList>
            <person name="Deng W."/>
            <person name="Burland V."/>
            <person name="Plunkett G. III"/>
            <person name="Boutin A."/>
            <person name="Mayhew G.F."/>
            <person name="Liss P."/>
            <person name="Perna N.T."/>
            <person name="Rose D.J."/>
            <person name="Mau B."/>
            <person name="Zhou S."/>
            <person name="Schwartz D.C."/>
            <person name="Fetherston J.D."/>
            <person name="Lindler L.E."/>
            <person name="Brubaker R.R."/>
            <person name="Plano G.V."/>
            <person name="Straley S.C."/>
            <person name="McDonough K.A."/>
            <person name="Nilles M.L."/>
            <person name="Matson J.S."/>
            <person name="Blattner F.R."/>
            <person name="Perry R.D."/>
        </authorList>
    </citation>
    <scope>NUCLEOTIDE SEQUENCE [LARGE SCALE GENOMIC DNA]</scope>
    <source>
        <strain>KIM10+ / Biovar Mediaevalis</strain>
    </source>
</reference>
<reference key="3">
    <citation type="journal article" date="2004" name="DNA Res.">
        <title>Complete genome sequence of Yersinia pestis strain 91001, an isolate avirulent to humans.</title>
        <authorList>
            <person name="Song Y."/>
            <person name="Tong Z."/>
            <person name="Wang J."/>
            <person name="Wang L."/>
            <person name="Guo Z."/>
            <person name="Han Y."/>
            <person name="Zhang J."/>
            <person name="Pei D."/>
            <person name="Zhou D."/>
            <person name="Qin H."/>
            <person name="Pang X."/>
            <person name="Han Y."/>
            <person name="Zhai J."/>
            <person name="Li M."/>
            <person name="Cui B."/>
            <person name="Qi Z."/>
            <person name="Jin L."/>
            <person name="Dai R."/>
            <person name="Chen F."/>
            <person name="Li S."/>
            <person name="Ye C."/>
            <person name="Du Z."/>
            <person name="Lin W."/>
            <person name="Wang J."/>
            <person name="Yu J."/>
            <person name="Yang H."/>
            <person name="Wang J."/>
            <person name="Huang P."/>
            <person name="Yang R."/>
        </authorList>
    </citation>
    <scope>NUCLEOTIDE SEQUENCE [LARGE SCALE GENOMIC DNA]</scope>
    <source>
        <strain>91001 / Biovar Mediaevalis</strain>
    </source>
</reference>
<dbReference type="EC" id="3.4.24.-"/>
<dbReference type="EMBL" id="AL590842">
    <property type="protein sequence ID" value="CAL19716.1"/>
    <property type="molecule type" value="Genomic_DNA"/>
</dbReference>
<dbReference type="EMBL" id="AE009952">
    <property type="protein sequence ID" value="AAM86678.1"/>
    <property type="molecule type" value="Genomic_DNA"/>
</dbReference>
<dbReference type="EMBL" id="AE017042">
    <property type="protein sequence ID" value="AAS62983.1"/>
    <property type="molecule type" value="Genomic_DNA"/>
</dbReference>
<dbReference type="PIR" id="AB0129">
    <property type="entry name" value="AB0129"/>
</dbReference>
<dbReference type="RefSeq" id="WP_002212138.1">
    <property type="nucleotide sequence ID" value="NZ_WUCM01000044.1"/>
</dbReference>
<dbReference type="RefSeq" id="YP_002346094.1">
    <property type="nucleotide sequence ID" value="NC_003143.1"/>
</dbReference>
<dbReference type="SMR" id="Q8ZH59"/>
<dbReference type="STRING" id="214092.YPO1051"/>
<dbReference type="MEROPS" id="M50.004"/>
<dbReference type="PaxDb" id="214092-YPO1051"/>
<dbReference type="DNASU" id="1148075"/>
<dbReference type="EnsemblBacteria" id="AAS62983">
    <property type="protein sequence ID" value="AAS62983"/>
    <property type="gene ID" value="YP_2799"/>
</dbReference>
<dbReference type="GeneID" id="57977510"/>
<dbReference type="KEGG" id="ype:YPO1051"/>
<dbReference type="KEGG" id="ypk:y3128"/>
<dbReference type="KEGG" id="ypm:YP_2799"/>
<dbReference type="PATRIC" id="fig|214092.21.peg.1339"/>
<dbReference type="eggNOG" id="COG0750">
    <property type="taxonomic scope" value="Bacteria"/>
</dbReference>
<dbReference type="HOGENOM" id="CLU_025778_0_2_6"/>
<dbReference type="OMA" id="EYGHFWA"/>
<dbReference type="OrthoDB" id="9782003at2"/>
<dbReference type="Proteomes" id="UP000000815">
    <property type="component" value="Chromosome"/>
</dbReference>
<dbReference type="Proteomes" id="UP000001019">
    <property type="component" value="Chromosome"/>
</dbReference>
<dbReference type="Proteomes" id="UP000002490">
    <property type="component" value="Chromosome"/>
</dbReference>
<dbReference type="GO" id="GO:0005886">
    <property type="term" value="C:plasma membrane"/>
    <property type="evidence" value="ECO:0007669"/>
    <property type="project" value="UniProtKB-SubCell"/>
</dbReference>
<dbReference type="GO" id="GO:0046872">
    <property type="term" value="F:metal ion binding"/>
    <property type="evidence" value="ECO:0007669"/>
    <property type="project" value="UniProtKB-KW"/>
</dbReference>
<dbReference type="GO" id="GO:0004222">
    <property type="term" value="F:metalloendopeptidase activity"/>
    <property type="evidence" value="ECO:0007669"/>
    <property type="project" value="InterPro"/>
</dbReference>
<dbReference type="GO" id="GO:0006508">
    <property type="term" value="P:proteolysis"/>
    <property type="evidence" value="ECO:0007669"/>
    <property type="project" value="UniProtKB-KW"/>
</dbReference>
<dbReference type="CDD" id="cd23082">
    <property type="entry name" value="cpPDZ1_EcRseP-like"/>
    <property type="match status" value="1"/>
</dbReference>
<dbReference type="CDD" id="cd23083">
    <property type="entry name" value="cpPDZ2_EcRseP-like"/>
    <property type="match status" value="1"/>
</dbReference>
<dbReference type="CDD" id="cd06163">
    <property type="entry name" value="S2P-M50_PDZ_RseP-like"/>
    <property type="match status" value="1"/>
</dbReference>
<dbReference type="FunFam" id="2.30.42.10:FF:000095">
    <property type="entry name" value="Zinc metalloprotease"/>
    <property type="match status" value="1"/>
</dbReference>
<dbReference type="Gene3D" id="2.30.42.10">
    <property type="match status" value="2"/>
</dbReference>
<dbReference type="InterPro" id="IPR001478">
    <property type="entry name" value="PDZ"/>
</dbReference>
<dbReference type="InterPro" id="IPR041489">
    <property type="entry name" value="PDZ_6"/>
</dbReference>
<dbReference type="InterPro" id="IPR036034">
    <property type="entry name" value="PDZ_sf"/>
</dbReference>
<dbReference type="InterPro" id="IPR004387">
    <property type="entry name" value="Pept_M50_Zn"/>
</dbReference>
<dbReference type="InterPro" id="IPR008915">
    <property type="entry name" value="Peptidase_M50"/>
</dbReference>
<dbReference type="NCBIfam" id="NF008046">
    <property type="entry name" value="PRK10779.1"/>
    <property type="match status" value="1"/>
</dbReference>
<dbReference type="NCBIfam" id="TIGR00054">
    <property type="entry name" value="RIP metalloprotease RseP"/>
    <property type="match status" value="1"/>
</dbReference>
<dbReference type="PANTHER" id="PTHR42837:SF2">
    <property type="entry name" value="MEMBRANE METALLOPROTEASE ARASP2, CHLOROPLASTIC-RELATED"/>
    <property type="match status" value="1"/>
</dbReference>
<dbReference type="PANTHER" id="PTHR42837">
    <property type="entry name" value="REGULATOR OF SIGMA-E PROTEASE RSEP"/>
    <property type="match status" value="1"/>
</dbReference>
<dbReference type="Pfam" id="PF17820">
    <property type="entry name" value="PDZ_6"/>
    <property type="match status" value="1"/>
</dbReference>
<dbReference type="Pfam" id="PF02163">
    <property type="entry name" value="Peptidase_M50"/>
    <property type="match status" value="1"/>
</dbReference>
<dbReference type="SMART" id="SM00228">
    <property type="entry name" value="PDZ"/>
    <property type="match status" value="2"/>
</dbReference>
<dbReference type="SUPFAM" id="SSF50156">
    <property type="entry name" value="PDZ domain-like"/>
    <property type="match status" value="2"/>
</dbReference>
<dbReference type="PROSITE" id="PS50106">
    <property type="entry name" value="PDZ"/>
    <property type="match status" value="1"/>
</dbReference>
<dbReference type="PROSITE" id="PS00142">
    <property type="entry name" value="ZINC_PROTEASE"/>
    <property type="match status" value="1"/>
</dbReference>
<protein>
    <recommendedName>
        <fullName>Protease RseP</fullName>
        <ecNumber>3.4.24.-</ecNumber>
    </recommendedName>
    <alternativeName>
        <fullName>S2P endopeptidase</fullName>
    </alternativeName>
    <alternativeName>
        <fullName>Site-2 protease RseP</fullName>
        <shortName>S2P protease RseP</shortName>
    </alternativeName>
    <alternativeName>
        <fullName>Site-2-type intramembrane protease</fullName>
    </alternativeName>
</protein>
<comment type="function">
    <text evidence="1">A site-2 regulated intramembrane protease (S2P) that cleaves the peptide bond between 'Ala-108' and 'Cys-109' in the transmembrane region of RseA. Part of a regulated intramembrane proteolysis (RIP) cascade. Acts on DegS-cleaved RseA to release the cytoplasmic domain of RseA. This provides the cell with sigma-E (RpoE) activity through the proteolysis of RseA (By similarity).</text>
</comment>
<comment type="cofactor">
    <cofactor evidence="1">
        <name>Zn(2+)</name>
        <dbReference type="ChEBI" id="CHEBI:29105"/>
    </cofactor>
</comment>
<comment type="subunit">
    <text evidence="1">Interacts with RseA.</text>
</comment>
<comment type="subcellular location">
    <subcellularLocation>
        <location evidence="1">Cell inner membrane</location>
        <topology evidence="1">Multi-pass membrane protein</topology>
    </subcellularLocation>
</comment>
<comment type="domain">
    <text evidence="1">The 2 circularly premutated PDZ domains act to negatively regulate protease action on intact RseA.</text>
</comment>
<comment type="miscellaneous">
    <text evidence="1">Regulated intramembrane proteolysis (RIP) occurs when an extracytoplasmic signal triggers a concerted proteolytic cascade to transmit information and elicit cellular responses. A membrane-spanning regulatory substrate protein is first cut extracytoplasmically (site-1 protease, S1P), then within the membrane itself (site-2 protease, S2P, this enzyme), while cytoplasmic proteases finish degrading the regulatory protein, liberating the effector protein (By similarity).</text>
</comment>
<comment type="similarity">
    <text evidence="5">Belongs to the peptidase M50B family.</text>
</comment>
<proteinExistence type="inferred from homology"/>